<reference key="1">
    <citation type="journal article" date="2000" name="Nature">
        <title>Sequence and analysis of chromosome 1 of the plant Arabidopsis thaliana.</title>
        <authorList>
            <person name="Theologis A."/>
            <person name="Ecker J.R."/>
            <person name="Palm C.J."/>
            <person name="Federspiel N.A."/>
            <person name="Kaul S."/>
            <person name="White O."/>
            <person name="Alonso J."/>
            <person name="Altafi H."/>
            <person name="Araujo R."/>
            <person name="Bowman C.L."/>
            <person name="Brooks S.Y."/>
            <person name="Buehler E."/>
            <person name="Chan A."/>
            <person name="Chao Q."/>
            <person name="Chen H."/>
            <person name="Cheuk R.F."/>
            <person name="Chin C.W."/>
            <person name="Chung M.K."/>
            <person name="Conn L."/>
            <person name="Conway A.B."/>
            <person name="Conway A.R."/>
            <person name="Creasy T.H."/>
            <person name="Dewar K."/>
            <person name="Dunn P."/>
            <person name="Etgu P."/>
            <person name="Feldblyum T.V."/>
            <person name="Feng J.-D."/>
            <person name="Fong B."/>
            <person name="Fujii C.Y."/>
            <person name="Gill J.E."/>
            <person name="Goldsmith A.D."/>
            <person name="Haas B."/>
            <person name="Hansen N.F."/>
            <person name="Hughes B."/>
            <person name="Huizar L."/>
            <person name="Hunter J.L."/>
            <person name="Jenkins J."/>
            <person name="Johnson-Hopson C."/>
            <person name="Khan S."/>
            <person name="Khaykin E."/>
            <person name="Kim C.J."/>
            <person name="Koo H.L."/>
            <person name="Kremenetskaia I."/>
            <person name="Kurtz D.B."/>
            <person name="Kwan A."/>
            <person name="Lam B."/>
            <person name="Langin-Hooper S."/>
            <person name="Lee A."/>
            <person name="Lee J.M."/>
            <person name="Lenz C.A."/>
            <person name="Li J.H."/>
            <person name="Li Y.-P."/>
            <person name="Lin X."/>
            <person name="Liu S.X."/>
            <person name="Liu Z.A."/>
            <person name="Luros J.S."/>
            <person name="Maiti R."/>
            <person name="Marziali A."/>
            <person name="Militscher J."/>
            <person name="Miranda M."/>
            <person name="Nguyen M."/>
            <person name="Nierman W.C."/>
            <person name="Osborne B.I."/>
            <person name="Pai G."/>
            <person name="Peterson J."/>
            <person name="Pham P.K."/>
            <person name="Rizzo M."/>
            <person name="Rooney T."/>
            <person name="Rowley D."/>
            <person name="Sakano H."/>
            <person name="Salzberg S.L."/>
            <person name="Schwartz J.R."/>
            <person name="Shinn P."/>
            <person name="Southwick A.M."/>
            <person name="Sun H."/>
            <person name="Tallon L.J."/>
            <person name="Tambunga G."/>
            <person name="Toriumi M.J."/>
            <person name="Town C.D."/>
            <person name="Utterback T."/>
            <person name="Van Aken S."/>
            <person name="Vaysberg M."/>
            <person name="Vysotskaia V.S."/>
            <person name="Walker M."/>
            <person name="Wu D."/>
            <person name="Yu G."/>
            <person name="Fraser C.M."/>
            <person name="Venter J.C."/>
            <person name="Davis R.W."/>
        </authorList>
    </citation>
    <scope>NUCLEOTIDE SEQUENCE [LARGE SCALE GENOMIC DNA]</scope>
    <source>
        <strain>cv. Columbia</strain>
    </source>
</reference>
<reference key="2">
    <citation type="journal article" date="2017" name="Plant J.">
        <title>Araport11: a complete reannotation of the Arabidopsis thaliana reference genome.</title>
        <authorList>
            <person name="Cheng C.Y."/>
            <person name="Krishnakumar V."/>
            <person name="Chan A.P."/>
            <person name="Thibaud-Nissen F."/>
            <person name="Schobel S."/>
            <person name="Town C.D."/>
        </authorList>
    </citation>
    <scope>GENOME REANNOTATION</scope>
    <source>
        <strain>cv. Columbia</strain>
    </source>
</reference>
<reference key="3">
    <citation type="journal article" date="2003" name="Science">
        <title>Empirical analysis of transcriptional activity in the Arabidopsis genome.</title>
        <authorList>
            <person name="Yamada K."/>
            <person name="Lim J."/>
            <person name="Dale J.M."/>
            <person name="Chen H."/>
            <person name="Shinn P."/>
            <person name="Palm C.J."/>
            <person name="Southwick A.M."/>
            <person name="Wu H.C."/>
            <person name="Kim C.J."/>
            <person name="Nguyen M."/>
            <person name="Pham P.K."/>
            <person name="Cheuk R.F."/>
            <person name="Karlin-Newmann G."/>
            <person name="Liu S.X."/>
            <person name="Lam B."/>
            <person name="Sakano H."/>
            <person name="Wu T."/>
            <person name="Yu G."/>
            <person name="Miranda M."/>
            <person name="Quach H.L."/>
            <person name="Tripp M."/>
            <person name="Chang C.H."/>
            <person name="Lee J.M."/>
            <person name="Toriumi M.J."/>
            <person name="Chan M.M."/>
            <person name="Tang C.C."/>
            <person name="Onodera C.S."/>
            <person name="Deng J.M."/>
            <person name="Akiyama K."/>
            <person name="Ansari Y."/>
            <person name="Arakawa T."/>
            <person name="Banh J."/>
            <person name="Banno F."/>
            <person name="Bowser L."/>
            <person name="Brooks S.Y."/>
            <person name="Carninci P."/>
            <person name="Chao Q."/>
            <person name="Choy N."/>
            <person name="Enju A."/>
            <person name="Goldsmith A.D."/>
            <person name="Gurjal M."/>
            <person name="Hansen N.F."/>
            <person name="Hayashizaki Y."/>
            <person name="Johnson-Hopson C."/>
            <person name="Hsuan V.W."/>
            <person name="Iida K."/>
            <person name="Karnes M."/>
            <person name="Khan S."/>
            <person name="Koesema E."/>
            <person name="Ishida J."/>
            <person name="Jiang P.X."/>
            <person name="Jones T."/>
            <person name="Kawai J."/>
            <person name="Kamiya A."/>
            <person name="Meyers C."/>
            <person name="Nakajima M."/>
            <person name="Narusaka M."/>
            <person name="Seki M."/>
            <person name="Sakurai T."/>
            <person name="Satou M."/>
            <person name="Tamse R."/>
            <person name="Vaysberg M."/>
            <person name="Wallender E.K."/>
            <person name="Wong C."/>
            <person name="Yamamura Y."/>
            <person name="Yuan S."/>
            <person name="Shinozaki K."/>
            <person name="Davis R.W."/>
            <person name="Theologis A."/>
            <person name="Ecker J.R."/>
        </authorList>
    </citation>
    <scope>NUCLEOTIDE SEQUENCE [LARGE SCALE MRNA] (ISOFORM 1)</scope>
    <source>
        <strain>cv. Columbia</strain>
    </source>
</reference>
<reference key="4">
    <citation type="submission" date="2002-03" db="EMBL/GenBank/DDBJ databases">
        <title>Full-length cDNA from Arabidopsis thaliana.</title>
        <authorList>
            <person name="Brover V.V."/>
            <person name="Troukhan M.E."/>
            <person name="Alexandrov N.A."/>
            <person name="Lu Y.-P."/>
            <person name="Flavell R.B."/>
            <person name="Feldmann K.A."/>
        </authorList>
    </citation>
    <scope>NUCLEOTIDE SEQUENCE [LARGE SCALE MRNA] (ISOFORM 1)</scope>
</reference>
<reference key="5">
    <citation type="journal article" date="2009" name="Plant Cell">
        <title>Uridine-ribohydrolase is a key regulator in the uridine degradation pathway of Arabidopsis.</title>
        <authorList>
            <person name="Jung B."/>
            <person name="Florchinger M."/>
            <person name="Kunz H.H."/>
            <person name="Traub M."/>
            <person name="Wartenberg R."/>
            <person name="Jeblick W."/>
            <person name="Neuhaus H.E."/>
            <person name="Mohlmann T."/>
        </authorList>
    </citation>
    <scope>IDENTIFICATION</scope>
</reference>
<reference key="6">
    <citation type="journal article" date="2011" name="New Phytol.">
        <title>Arabidopsis thaliana nucleosidase mutants provide new insights into nucleoside degradation.</title>
        <authorList>
            <person name="Riegler H."/>
            <person name="Geserick C."/>
            <person name="Zrenner R."/>
        </authorList>
    </citation>
    <scope>FUNCTION</scope>
    <scope>DISRUPTION PHENOTYPE</scope>
    <source>
        <strain>cv. Columbia</strain>
    </source>
</reference>
<reference key="7">
    <citation type="journal article" date="2011" name="Plant J.">
        <title>Arabidopsis nucleoside hydrolases involved in intracellular and extracellular degradation of purines.</title>
        <authorList>
            <person name="Jung B."/>
            <person name="Hoffmann C."/>
            <person name="Moehlmann T."/>
        </authorList>
    </citation>
    <scope>FUNCTION</scope>
    <scope>CATALYTIC ACTIVITY</scope>
    <scope>SUBCELLULAR LOCATION</scope>
    <scope>INDUCTION BY SENESCENCE</scope>
    <scope>GENE FAMILY</scope>
    <scope>NOMENCLATURE</scope>
    <source>
        <strain>cv. Columbia</strain>
    </source>
</reference>
<reference key="8">
    <citation type="journal article" date="2019" name="Plant Cell">
        <title>AMP and GMP catabolism in Arabidopsis converge on xanthosine, which is degraded by a nucleoside hydrolase heterocomplex.</title>
        <authorList>
            <person name="Baccolini C."/>
            <person name="Witte C.-P."/>
        </authorList>
    </citation>
    <scope>FUNCTION</scope>
    <scope>DISRUPTION PHENOTYPE</scope>
    <scope>BIOPHYSICOCHEMICAL PROPERTIES</scope>
    <scope>TISSUE SPECIFICITY</scope>
    <scope>SUBUNIT</scope>
    <scope>INTERACTION WITH URH1</scope>
    <scope>MUTAGENESIS OF ASP-14</scope>
    <scope>ACTIVE SITE</scope>
    <source>
        <strain>cv. Columbia</strain>
    </source>
</reference>
<evidence type="ECO:0000250" key="1"/>
<evidence type="ECO:0000250" key="2">
    <source>
        <dbReference type="UniProtKB" id="Q9SJM7"/>
    </source>
</evidence>
<evidence type="ECO:0000269" key="3">
    <source>
    </source>
</evidence>
<evidence type="ECO:0000269" key="4">
    <source>
    </source>
</evidence>
<evidence type="ECO:0000269" key="5">
    <source>
    </source>
</evidence>
<evidence type="ECO:0000303" key="6">
    <source>
    </source>
</evidence>
<evidence type="ECO:0000303" key="7">
    <source>
    </source>
</evidence>
<evidence type="ECO:0000303" key="8">
    <source>
    </source>
</evidence>
<evidence type="ECO:0000305" key="9"/>
<evidence type="ECO:0000312" key="10">
    <source>
        <dbReference type="Araport" id="AT1G05620"/>
    </source>
</evidence>
<evidence type="ECO:0000312" key="11">
    <source>
        <dbReference type="EMBL" id="AAD30614.1"/>
    </source>
</evidence>
<comment type="function">
    <text evidence="3 4 5">Involved in pyrimidine breakdown, especially in response to dark stress (PubMed:21599668, PubMed:30787180). In the presence of URH1, exhibits efficient inosine and xanthosine hydrolytic activities (PubMed:21599668, PubMed:30787180). Support inosine breakdown especially during the late phase of senescence (PubMed:21235647).</text>
</comment>
<comment type="catalytic activity">
    <reaction evidence="2">
        <text>uridine + H2O = D-ribose + uracil</text>
        <dbReference type="Rhea" id="RHEA:15577"/>
        <dbReference type="ChEBI" id="CHEBI:15377"/>
        <dbReference type="ChEBI" id="CHEBI:16704"/>
        <dbReference type="ChEBI" id="CHEBI:17568"/>
        <dbReference type="ChEBI" id="CHEBI:47013"/>
        <dbReference type="EC" id="3.2.2.3"/>
    </reaction>
</comment>
<comment type="catalytic activity">
    <reaction evidence="3">
        <text>inosine + H2O = hypoxanthine + D-ribose</text>
        <dbReference type="Rhea" id="RHEA:16657"/>
        <dbReference type="ChEBI" id="CHEBI:15377"/>
        <dbReference type="ChEBI" id="CHEBI:17368"/>
        <dbReference type="ChEBI" id="CHEBI:17596"/>
        <dbReference type="ChEBI" id="CHEBI:47013"/>
        <dbReference type="EC" id="3.2.2.2"/>
    </reaction>
</comment>
<comment type="catalytic activity">
    <reaction evidence="5">
        <text>xanthosine + H2O = D-ribose + xanthine</text>
        <dbReference type="Rhea" id="RHEA:27994"/>
        <dbReference type="ChEBI" id="CHEBI:15377"/>
        <dbReference type="ChEBI" id="CHEBI:17712"/>
        <dbReference type="ChEBI" id="CHEBI:18107"/>
        <dbReference type="ChEBI" id="CHEBI:47013"/>
    </reaction>
</comment>
<comment type="biophysicochemical properties">
    <kinetics>
        <KM evidence="5">0.06 mM for xanthosine (when in complex with URH2)</KM>
        <KM evidence="5">4.3 mM for uridine (when in complex with URH2)</KM>
        <KM evidence="5">0.6 mM for inosine (when in complex with URH2)</KM>
        <text evidence="5">kcat is 23.3 sec(-1) with xanthosine as substrate (when in complex with URH2) (PubMed:30787180). kcat is 55.3 sec(-1) with uridine as substrate (when in complex with URH2) (PubMed:30787180). kcat is 42.3 sec(-1) with inosine as substrate (when in complex with URH2) (PubMed:30787180).</text>
    </kinetics>
</comment>
<comment type="subunit">
    <text evidence="5">Component of the NSH heterocomplex made of URH1/NSH1 and URH2/NSH2 which exhibits strong xanthosine nucleosidase activity (PubMed:30787180). Interacts with URH1 (PubMed:30787180).</text>
</comment>
<comment type="subcellular location">
    <subcellularLocation>
        <location evidence="3">Cytoplasm</location>
        <location evidence="3">Cytosol</location>
    </subcellularLocation>
</comment>
<comment type="alternative products">
    <event type="alternative splicing"/>
    <isoform>
        <id>Q8LAC4-1</id>
        <name>1</name>
        <sequence type="displayed"/>
    </isoform>
    <isoform>
        <id>Q8LAC4-2</id>
        <name>2</name>
        <sequence type="described" ref="VSP_039276"/>
    </isoform>
</comment>
<comment type="tissue specificity">
    <text evidence="5">Expressed in roots, seedlings and flowers.</text>
</comment>
<comment type="induction">
    <text evidence="3">Accumulates during senescence.</text>
</comment>
<comment type="disruption phenotype">
    <text evidence="4 5">Normal seedling germination and plant growth and development in standard conditions (PubMed:21599668). No abnormal levels of nucleoside intermediates (PubMed:21599668). The roots of the double mutant urh1 urh2 accumulates strong levels of xanthosine (PubMed:21599668, PubMed:30787180).</text>
</comment>
<comment type="similarity">
    <text evidence="9">Belongs to the IUNH family.</text>
</comment>
<comment type="sequence caution" evidence="9">
    <conflict type="erroneous gene model prediction">
        <sequence resource="EMBL-CDS" id="AAD30614"/>
    </conflict>
</comment>
<sequence>MAIGDRKKIIIDTDPGIDDAMAIFVALNSPEVDVIGLTTIFGNVYTTLATRNALHLLEVAGRTDIPVAEGTHKTFLNDTKLRIADFVHGKDGLGNQNFPPPKGKPIEKSGPEFLVEQAKLCPGEITVVALGPLTNLALAVQLDPEFSKNVGQIVLLGGAFAVNGNVNPASEANIFGDPEAADIVFTCGADIIAVGINVTHQVIMTADDKDKLASSKGKLAQYLCKILDVYYDYHLTAYEIKGVYLHDPATILAAFLPSLFTYTEGVARVQTSGITRGLTLLYNNLKRFEEANEWSDKPTVKVAVTVDAPAVVKLIMDRLMES</sequence>
<proteinExistence type="evidence at protein level"/>
<dbReference type="EC" id="3.2.2.3" evidence="2"/>
<dbReference type="EC" id="3.2.2.2" evidence="3"/>
<dbReference type="EC" id="3.2.2.-" evidence="5"/>
<dbReference type="EMBL" id="AC007153">
    <property type="protein sequence ID" value="AAD30614.1"/>
    <property type="status" value="ALT_SEQ"/>
    <property type="molecule type" value="Genomic_DNA"/>
</dbReference>
<dbReference type="EMBL" id="CP002684">
    <property type="protein sequence ID" value="AEE27866.1"/>
    <property type="molecule type" value="Genomic_DNA"/>
</dbReference>
<dbReference type="EMBL" id="CP002684">
    <property type="protein sequence ID" value="AEE27867.1"/>
    <property type="molecule type" value="Genomic_DNA"/>
</dbReference>
<dbReference type="EMBL" id="BT002049">
    <property type="protein sequence ID" value="AAN72060.1"/>
    <property type="molecule type" value="mRNA"/>
</dbReference>
<dbReference type="EMBL" id="BT008720">
    <property type="protein sequence ID" value="AAP42733.1"/>
    <property type="molecule type" value="mRNA"/>
</dbReference>
<dbReference type="EMBL" id="AY087913">
    <property type="protein sequence ID" value="AAM65464.1"/>
    <property type="molecule type" value="mRNA"/>
</dbReference>
<dbReference type="PIR" id="C86190">
    <property type="entry name" value="C86190"/>
</dbReference>
<dbReference type="RefSeq" id="NP_001117234.1">
    <molecule id="Q8LAC4-2"/>
    <property type="nucleotide sequence ID" value="NM_001123762.2"/>
</dbReference>
<dbReference type="RefSeq" id="NP_563745.1">
    <molecule id="Q8LAC4-1"/>
    <property type="nucleotide sequence ID" value="NM_100442.5"/>
</dbReference>
<dbReference type="SMR" id="Q8LAC4"/>
<dbReference type="BioGRID" id="22310">
    <property type="interactions" value="1"/>
</dbReference>
<dbReference type="FunCoup" id="Q8LAC4">
    <property type="interactions" value="955"/>
</dbReference>
<dbReference type="STRING" id="3702.Q8LAC4"/>
<dbReference type="PaxDb" id="3702-AT1G05620.1"/>
<dbReference type="ProteomicsDB" id="228634">
    <molecule id="Q8LAC4-1"/>
</dbReference>
<dbReference type="EnsemblPlants" id="AT1G05620.1">
    <molecule id="Q8LAC4-1"/>
    <property type="protein sequence ID" value="AT1G05620.1"/>
    <property type="gene ID" value="AT1G05620"/>
</dbReference>
<dbReference type="EnsemblPlants" id="AT1G05620.2">
    <molecule id="Q8LAC4-2"/>
    <property type="protein sequence ID" value="AT1G05620.2"/>
    <property type="gene ID" value="AT1G05620"/>
</dbReference>
<dbReference type="GeneID" id="837068"/>
<dbReference type="Gramene" id="AT1G05620.1">
    <molecule id="Q8LAC4-1"/>
    <property type="protein sequence ID" value="AT1G05620.1"/>
    <property type="gene ID" value="AT1G05620"/>
</dbReference>
<dbReference type="Gramene" id="AT1G05620.2">
    <molecule id="Q8LAC4-2"/>
    <property type="protein sequence ID" value="AT1G05620.2"/>
    <property type="gene ID" value="AT1G05620"/>
</dbReference>
<dbReference type="KEGG" id="ath:AT1G05620"/>
<dbReference type="Araport" id="AT1G05620"/>
<dbReference type="TAIR" id="AT1G05620">
    <property type="gene designation" value="URH2"/>
</dbReference>
<dbReference type="eggNOG" id="KOG2938">
    <property type="taxonomic scope" value="Eukaryota"/>
</dbReference>
<dbReference type="HOGENOM" id="CLU_036838_2_1_1"/>
<dbReference type="InParanoid" id="Q8LAC4"/>
<dbReference type="OMA" id="HMHDPFA"/>
<dbReference type="OrthoDB" id="432381at2759"/>
<dbReference type="PhylomeDB" id="Q8LAC4"/>
<dbReference type="PRO" id="PR:Q8LAC4"/>
<dbReference type="Proteomes" id="UP000006548">
    <property type="component" value="Chromosome 1"/>
</dbReference>
<dbReference type="ExpressionAtlas" id="Q8LAC4">
    <property type="expression patterns" value="baseline and differential"/>
</dbReference>
<dbReference type="GO" id="GO:0005829">
    <property type="term" value="C:cytosol"/>
    <property type="evidence" value="ECO:0000314"/>
    <property type="project" value="TAIR"/>
</dbReference>
<dbReference type="GO" id="GO:0047724">
    <property type="term" value="F:inosine nucleosidase activity"/>
    <property type="evidence" value="ECO:0000315"/>
    <property type="project" value="TAIR"/>
</dbReference>
<dbReference type="GO" id="GO:0046982">
    <property type="term" value="F:protein heterodimerization activity"/>
    <property type="evidence" value="ECO:0000314"/>
    <property type="project" value="UniProtKB"/>
</dbReference>
<dbReference type="GO" id="GO:0008477">
    <property type="term" value="F:purine nucleosidase activity"/>
    <property type="evidence" value="ECO:0000314"/>
    <property type="project" value="TAIR"/>
</dbReference>
<dbReference type="GO" id="GO:0035251">
    <property type="term" value="F:UDP-glucosyltransferase activity"/>
    <property type="evidence" value="ECO:0000314"/>
    <property type="project" value="TAIR"/>
</dbReference>
<dbReference type="GO" id="GO:0045437">
    <property type="term" value="F:uridine nucleosidase activity"/>
    <property type="evidence" value="ECO:0007669"/>
    <property type="project" value="UniProtKB-EC"/>
</dbReference>
<dbReference type="GO" id="GO:0072585">
    <property type="term" value="F:xanthosine nucleotidase activity"/>
    <property type="evidence" value="ECO:0007669"/>
    <property type="project" value="RHEA"/>
</dbReference>
<dbReference type="GO" id="GO:0006148">
    <property type="term" value="P:inosine catabolic process"/>
    <property type="evidence" value="ECO:0000315"/>
    <property type="project" value="TAIR"/>
</dbReference>
<dbReference type="GO" id="GO:0010150">
    <property type="term" value="P:leaf senescence"/>
    <property type="evidence" value="ECO:0000270"/>
    <property type="project" value="TAIR"/>
</dbReference>
<dbReference type="CDD" id="cd02650">
    <property type="entry name" value="nuc_hydro_CaPnhB"/>
    <property type="match status" value="1"/>
</dbReference>
<dbReference type="FunFam" id="3.90.245.10:FF:000004">
    <property type="entry name" value="Probable uridine nucleosidase 1"/>
    <property type="match status" value="1"/>
</dbReference>
<dbReference type="Gene3D" id="3.90.245.10">
    <property type="entry name" value="Ribonucleoside hydrolase-like"/>
    <property type="match status" value="1"/>
</dbReference>
<dbReference type="InterPro" id="IPR001910">
    <property type="entry name" value="Inosine/uridine_hydrolase_dom"/>
</dbReference>
<dbReference type="InterPro" id="IPR023186">
    <property type="entry name" value="IUNH"/>
</dbReference>
<dbReference type="InterPro" id="IPR036452">
    <property type="entry name" value="Ribo_hydro-like"/>
</dbReference>
<dbReference type="PANTHER" id="PTHR12304">
    <property type="entry name" value="INOSINE-URIDINE PREFERRING NUCLEOSIDE HYDROLASE"/>
    <property type="match status" value="1"/>
</dbReference>
<dbReference type="PANTHER" id="PTHR12304:SF4">
    <property type="entry name" value="URIDINE NUCLEOSIDASE"/>
    <property type="match status" value="1"/>
</dbReference>
<dbReference type="Pfam" id="PF01156">
    <property type="entry name" value="IU_nuc_hydro"/>
    <property type="match status" value="1"/>
</dbReference>
<dbReference type="SUPFAM" id="SSF53590">
    <property type="entry name" value="Nucleoside hydrolase"/>
    <property type="match status" value="1"/>
</dbReference>
<protein>
    <recommendedName>
        <fullName evidence="6">Probable uridine nucleosidase 2</fullName>
        <ecNumber evidence="2">3.2.2.3</ecNumber>
    </recommendedName>
    <alternativeName>
        <fullName evidence="7">Inosine nucleosidase</fullName>
        <ecNumber evidence="3">3.2.2.2</ecNumber>
    </alternativeName>
    <alternativeName>
        <fullName evidence="7">Nucleoside hydrolase 2</fullName>
    </alternativeName>
    <alternativeName>
        <fullName evidence="6">Uridine ribohydrolase 2</fullName>
    </alternativeName>
    <alternativeName>
        <fullName evidence="8">Xanthosine nucleosidase</fullName>
        <ecNumber evidence="5">3.2.2.-</ecNumber>
    </alternativeName>
</protein>
<name>URH2_ARATH</name>
<gene>
    <name evidence="6" type="primary">URH2</name>
    <name evidence="7" type="synonym">NSH2</name>
    <name evidence="10" type="ordered locus">At1g05620</name>
    <name evidence="11" type="ORF">F3F20.7</name>
</gene>
<organism>
    <name type="scientific">Arabidopsis thaliana</name>
    <name type="common">Mouse-ear cress</name>
    <dbReference type="NCBI Taxonomy" id="3702"/>
    <lineage>
        <taxon>Eukaryota</taxon>
        <taxon>Viridiplantae</taxon>
        <taxon>Streptophyta</taxon>
        <taxon>Embryophyta</taxon>
        <taxon>Tracheophyta</taxon>
        <taxon>Spermatophyta</taxon>
        <taxon>Magnoliopsida</taxon>
        <taxon>eudicotyledons</taxon>
        <taxon>Gunneridae</taxon>
        <taxon>Pentapetalae</taxon>
        <taxon>rosids</taxon>
        <taxon>malvids</taxon>
        <taxon>Brassicales</taxon>
        <taxon>Brassicaceae</taxon>
        <taxon>Camelineae</taxon>
        <taxon>Arabidopsis</taxon>
    </lineage>
</organism>
<keyword id="KW-0025">Alternative splicing</keyword>
<keyword id="KW-0963">Cytoplasm</keyword>
<keyword id="KW-0326">Glycosidase</keyword>
<keyword id="KW-0378">Hydrolase</keyword>
<keyword id="KW-1185">Reference proteome</keyword>
<feature type="chain" id="PRO_0000394503" description="Probable uridine nucleosidase 2">
    <location>
        <begin position="1"/>
        <end position="322"/>
    </location>
</feature>
<feature type="active site" evidence="5">
    <location>
        <position position="14"/>
    </location>
</feature>
<feature type="active site" evidence="1">
    <location>
        <position position="246"/>
    </location>
</feature>
<feature type="splice variant" id="VSP_039276" description="In isoform 2." evidence="9">
    <location>
        <begin position="1"/>
        <end position="20"/>
    </location>
</feature>
<feature type="mutagenesis site" description="Abrogated hydrolase activity." evidence="5">
    <original>D</original>
    <variation>A</variation>
    <location>
        <position position="14"/>
    </location>
</feature>
<accession>Q8LAC4</accession>
<accession>B3H6Y7</accession>
<accession>Q9SYK3</accession>